<accession>B3CN54</accession>
<feature type="chain" id="PRO_1000117311" description="Cysteine--tRNA ligase">
    <location>
        <begin position="1"/>
        <end position="464"/>
    </location>
</feature>
<feature type="short sequence motif" description="'HIGH' region">
    <location>
        <begin position="30"/>
        <end position="40"/>
    </location>
</feature>
<feature type="short sequence motif" description="'KMSKS' region">
    <location>
        <begin position="270"/>
        <end position="274"/>
    </location>
</feature>
<feature type="binding site" evidence="1">
    <location>
        <position position="28"/>
    </location>
    <ligand>
        <name>Zn(2+)</name>
        <dbReference type="ChEBI" id="CHEBI:29105"/>
    </ligand>
</feature>
<feature type="binding site" evidence="1">
    <location>
        <position position="212"/>
    </location>
    <ligand>
        <name>Zn(2+)</name>
        <dbReference type="ChEBI" id="CHEBI:29105"/>
    </ligand>
</feature>
<feature type="binding site" evidence="1">
    <location>
        <position position="237"/>
    </location>
    <ligand>
        <name>Zn(2+)</name>
        <dbReference type="ChEBI" id="CHEBI:29105"/>
    </ligand>
</feature>
<feature type="binding site" evidence="1">
    <location>
        <position position="241"/>
    </location>
    <ligand>
        <name>Zn(2+)</name>
        <dbReference type="ChEBI" id="CHEBI:29105"/>
    </ligand>
</feature>
<feature type="binding site" evidence="1">
    <location>
        <position position="273"/>
    </location>
    <ligand>
        <name>ATP</name>
        <dbReference type="ChEBI" id="CHEBI:30616"/>
    </ligand>
</feature>
<organism>
    <name type="scientific">Wolbachia pipientis subsp. Culex pipiens (strain wPip)</name>
    <dbReference type="NCBI Taxonomy" id="570417"/>
    <lineage>
        <taxon>Bacteria</taxon>
        <taxon>Pseudomonadati</taxon>
        <taxon>Pseudomonadota</taxon>
        <taxon>Alphaproteobacteria</taxon>
        <taxon>Rickettsiales</taxon>
        <taxon>Anaplasmataceae</taxon>
        <taxon>Wolbachieae</taxon>
        <taxon>Wolbachia</taxon>
    </lineage>
</organism>
<keyword id="KW-0030">Aminoacyl-tRNA synthetase</keyword>
<keyword id="KW-0067">ATP-binding</keyword>
<keyword id="KW-0963">Cytoplasm</keyword>
<keyword id="KW-0436">Ligase</keyword>
<keyword id="KW-0479">Metal-binding</keyword>
<keyword id="KW-0547">Nucleotide-binding</keyword>
<keyword id="KW-0648">Protein biosynthesis</keyword>
<keyword id="KW-0862">Zinc</keyword>
<evidence type="ECO:0000255" key="1">
    <source>
        <dbReference type="HAMAP-Rule" id="MF_00041"/>
    </source>
</evidence>
<protein>
    <recommendedName>
        <fullName evidence="1">Cysteine--tRNA ligase</fullName>
        <ecNumber evidence="1">6.1.1.16</ecNumber>
    </recommendedName>
    <alternativeName>
        <fullName evidence="1">Cysteinyl-tRNA synthetase</fullName>
        <shortName evidence="1">CysRS</shortName>
    </alternativeName>
</protein>
<dbReference type="EC" id="6.1.1.16" evidence="1"/>
<dbReference type="EMBL" id="AM999887">
    <property type="protein sequence ID" value="CAQ54186.1"/>
    <property type="molecule type" value="Genomic_DNA"/>
</dbReference>
<dbReference type="RefSeq" id="WP_012481729.1">
    <property type="nucleotide sequence ID" value="NC_010981.1"/>
</dbReference>
<dbReference type="SMR" id="B3CN54"/>
<dbReference type="KEGG" id="wpi:WP0077"/>
<dbReference type="eggNOG" id="COG0215">
    <property type="taxonomic scope" value="Bacteria"/>
</dbReference>
<dbReference type="HOGENOM" id="CLU_013528_0_1_5"/>
<dbReference type="Proteomes" id="UP000008814">
    <property type="component" value="Chromosome"/>
</dbReference>
<dbReference type="GO" id="GO:0005829">
    <property type="term" value="C:cytosol"/>
    <property type="evidence" value="ECO:0007669"/>
    <property type="project" value="TreeGrafter"/>
</dbReference>
<dbReference type="GO" id="GO:0005524">
    <property type="term" value="F:ATP binding"/>
    <property type="evidence" value="ECO:0007669"/>
    <property type="project" value="UniProtKB-UniRule"/>
</dbReference>
<dbReference type="GO" id="GO:0004817">
    <property type="term" value="F:cysteine-tRNA ligase activity"/>
    <property type="evidence" value="ECO:0007669"/>
    <property type="project" value="UniProtKB-UniRule"/>
</dbReference>
<dbReference type="GO" id="GO:0008270">
    <property type="term" value="F:zinc ion binding"/>
    <property type="evidence" value="ECO:0007669"/>
    <property type="project" value="UniProtKB-UniRule"/>
</dbReference>
<dbReference type="GO" id="GO:0006423">
    <property type="term" value="P:cysteinyl-tRNA aminoacylation"/>
    <property type="evidence" value="ECO:0007669"/>
    <property type="project" value="UniProtKB-UniRule"/>
</dbReference>
<dbReference type="CDD" id="cd00672">
    <property type="entry name" value="CysRS_core"/>
    <property type="match status" value="1"/>
</dbReference>
<dbReference type="FunFam" id="3.40.50.620:FF:000009">
    <property type="entry name" value="Cysteine--tRNA ligase"/>
    <property type="match status" value="1"/>
</dbReference>
<dbReference type="Gene3D" id="1.20.120.1910">
    <property type="entry name" value="Cysteine-tRNA ligase, C-terminal anti-codon recognition domain"/>
    <property type="match status" value="1"/>
</dbReference>
<dbReference type="Gene3D" id="3.40.50.620">
    <property type="entry name" value="HUPs"/>
    <property type="match status" value="1"/>
</dbReference>
<dbReference type="HAMAP" id="MF_00041">
    <property type="entry name" value="Cys_tRNA_synth"/>
    <property type="match status" value="1"/>
</dbReference>
<dbReference type="InterPro" id="IPR015803">
    <property type="entry name" value="Cys-tRNA-ligase"/>
</dbReference>
<dbReference type="InterPro" id="IPR015273">
    <property type="entry name" value="Cys-tRNA-synt_Ia_DALR"/>
</dbReference>
<dbReference type="InterPro" id="IPR024909">
    <property type="entry name" value="Cys-tRNA/MSH_ligase"/>
</dbReference>
<dbReference type="InterPro" id="IPR056411">
    <property type="entry name" value="CysS_C"/>
</dbReference>
<dbReference type="InterPro" id="IPR014729">
    <property type="entry name" value="Rossmann-like_a/b/a_fold"/>
</dbReference>
<dbReference type="InterPro" id="IPR032678">
    <property type="entry name" value="tRNA-synt_1_cat_dom"/>
</dbReference>
<dbReference type="InterPro" id="IPR009080">
    <property type="entry name" value="tRNAsynth_Ia_anticodon-bd"/>
</dbReference>
<dbReference type="NCBIfam" id="TIGR00435">
    <property type="entry name" value="cysS"/>
    <property type="match status" value="1"/>
</dbReference>
<dbReference type="PANTHER" id="PTHR10890:SF3">
    <property type="entry name" value="CYSTEINE--TRNA LIGASE, CYTOPLASMIC"/>
    <property type="match status" value="1"/>
</dbReference>
<dbReference type="PANTHER" id="PTHR10890">
    <property type="entry name" value="CYSTEINYL-TRNA SYNTHETASE"/>
    <property type="match status" value="1"/>
</dbReference>
<dbReference type="Pfam" id="PF23493">
    <property type="entry name" value="CysS_C"/>
    <property type="match status" value="1"/>
</dbReference>
<dbReference type="Pfam" id="PF09190">
    <property type="entry name" value="DALR_2"/>
    <property type="match status" value="1"/>
</dbReference>
<dbReference type="Pfam" id="PF01406">
    <property type="entry name" value="tRNA-synt_1e"/>
    <property type="match status" value="1"/>
</dbReference>
<dbReference type="PRINTS" id="PR00983">
    <property type="entry name" value="TRNASYNTHCYS"/>
</dbReference>
<dbReference type="SMART" id="SM00840">
    <property type="entry name" value="DALR_2"/>
    <property type="match status" value="1"/>
</dbReference>
<dbReference type="SUPFAM" id="SSF47323">
    <property type="entry name" value="Anticodon-binding domain of a subclass of class I aminoacyl-tRNA synthetases"/>
    <property type="match status" value="1"/>
</dbReference>
<dbReference type="SUPFAM" id="SSF52374">
    <property type="entry name" value="Nucleotidylyl transferase"/>
    <property type="match status" value="1"/>
</dbReference>
<comment type="catalytic activity">
    <reaction evidence="1">
        <text>tRNA(Cys) + L-cysteine + ATP = L-cysteinyl-tRNA(Cys) + AMP + diphosphate</text>
        <dbReference type="Rhea" id="RHEA:17773"/>
        <dbReference type="Rhea" id="RHEA-COMP:9661"/>
        <dbReference type="Rhea" id="RHEA-COMP:9679"/>
        <dbReference type="ChEBI" id="CHEBI:30616"/>
        <dbReference type="ChEBI" id="CHEBI:33019"/>
        <dbReference type="ChEBI" id="CHEBI:35235"/>
        <dbReference type="ChEBI" id="CHEBI:78442"/>
        <dbReference type="ChEBI" id="CHEBI:78517"/>
        <dbReference type="ChEBI" id="CHEBI:456215"/>
        <dbReference type="EC" id="6.1.1.16"/>
    </reaction>
</comment>
<comment type="cofactor">
    <cofactor evidence="1">
        <name>Zn(2+)</name>
        <dbReference type="ChEBI" id="CHEBI:29105"/>
    </cofactor>
    <text evidence="1">Binds 1 zinc ion per subunit.</text>
</comment>
<comment type="subunit">
    <text evidence="1">Monomer.</text>
</comment>
<comment type="subcellular location">
    <subcellularLocation>
        <location evidence="1">Cytoplasm</location>
    </subcellularLocation>
</comment>
<comment type="similarity">
    <text evidence="1">Belongs to the class-I aminoacyl-tRNA synthetase family.</text>
</comment>
<sequence>MVKLYNTLTKKKEPFTPIDKDHIKMYVCGPTVYDTAHIGNARSIVVYDVLFRLLKFCYGKVTYVRNITDIDDKIINAANEKNSNIESISKYYTKTFHEDMESINCAEPTYEPKATENIDNIIKLIESLLQAGHAYESNKHVYFSVESYPEYGVLSGKKIDELNYGSRVEVGENKKHPGDFVLWKPANETDYKLSSHWNSPWGEGRPGWHIECSAMSYAYLGKDFDIHGGGIDLQFPHHENEIAQSKSAFAESTFAKYWVHNGFLTVNEEKMSKSLFNIVKVRDLLDSGIKGEVIRYALLKTHYRKPLDWTENVISESQETLNKFYRLLRSTCIEESDTEVSKDFIEALKNDLNIPEAVAILHEMATEINKTSNEYEKLKLTKKFVKSARFIGILESSYQEWFASGVSHQEIERLIDLRKVAKQNKDYDTADKIREQLKQMGVTISDNEDGTTTWYGKLSPIVYR</sequence>
<reference key="1">
    <citation type="journal article" date="2008" name="Mol. Biol. Evol.">
        <title>Genome evolution of Wolbachia strain wPip from the Culex pipiens group.</title>
        <authorList>
            <person name="Klasson L."/>
            <person name="Walker T."/>
            <person name="Sebaihia M."/>
            <person name="Sanders M.J."/>
            <person name="Quail M.A."/>
            <person name="Lord A."/>
            <person name="Sanders S."/>
            <person name="Earl J."/>
            <person name="O'Neill S.L."/>
            <person name="Thomson N."/>
            <person name="Sinkins S.P."/>
            <person name="Parkhill J."/>
        </authorList>
    </citation>
    <scope>NUCLEOTIDE SEQUENCE [LARGE SCALE GENOMIC DNA]</scope>
    <source>
        <strain>wPip</strain>
    </source>
</reference>
<proteinExistence type="inferred from homology"/>
<gene>
    <name evidence="1" type="primary">cysS</name>
    <name type="ordered locus">WP0077</name>
</gene>
<name>SYC_WOLPP</name>